<sequence length="245" mass="25986">MIIPAIDLIDGNVVRLYQGDYGQQTTFDLSPLAQLQSYEAQGAKWLHIVDLTGAKDPAKRQTLLISQLVAGLNANIQVGGGIRTEEQVTELLNIGVKRVVIGSLAVKEPELVKQWFIKYGSEAICLALDVNINQSGEKIVAVSGWQSGGGKSLESLVETFSAVGLKHALVTDISRDGTLTGANTALYQEIAASYPDIAWQASGGIATLADVAAVRDSGAAGIIIGKALLINQFNVVEAIQCWPND</sequence>
<protein>
    <recommendedName>
        <fullName evidence="1">1-(5-phosphoribosyl)-5-[(5-phosphoribosylamino)methylideneamino] imidazole-4-carboxamide isomerase</fullName>
        <ecNumber evidence="1">5.3.1.16</ecNumber>
    </recommendedName>
    <alternativeName>
        <fullName evidence="1">Phosphoribosylformimino-5-aminoimidazole carboxamide ribotide isomerase</fullName>
    </alternativeName>
</protein>
<feature type="chain" id="PRO_1000063232" description="1-(5-phosphoribosyl)-5-[(5-phosphoribosylamino)methylideneamino] imidazole-4-carboxamide isomerase">
    <location>
        <begin position="1"/>
        <end position="245"/>
    </location>
</feature>
<feature type="active site" description="Proton acceptor" evidence="1">
    <location>
        <position position="7"/>
    </location>
</feature>
<feature type="active site" description="Proton donor" evidence="1">
    <location>
        <position position="129"/>
    </location>
</feature>
<organism>
    <name type="scientific">Shewanella baltica (strain OS185)</name>
    <dbReference type="NCBI Taxonomy" id="402882"/>
    <lineage>
        <taxon>Bacteria</taxon>
        <taxon>Pseudomonadati</taxon>
        <taxon>Pseudomonadota</taxon>
        <taxon>Gammaproteobacteria</taxon>
        <taxon>Alteromonadales</taxon>
        <taxon>Shewanellaceae</taxon>
        <taxon>Shewanella</taxon>
    </lineage>
</organism>
<name>HIS4_SHEB8</name>
<gene>
    <name evidence="1" type="primary">hisA</name>
    <name type="ordered locus">Shew185_2423</name>
</gene>
<comment type="catalytic activity">
    <reaction evidence="1">
        <text>1-(5-phospho-beta-D-ribosyl)-5-[(5-phospho-beta-D-ribosylamino)methylideneamino]imidazole-4-carboxamide = 5-[(5-phospho-1-deoxy-D-ribulos-1-ylimino)methylamino]-1-(5-phospho-beta-D-ribosyl)imidazole-4-carboxamide</text>
        <dbReference type="Rhea" id="RHEA:15469"/>
        <dbReference type="ChEBI" id="CHEBI:58435"/>
        <dbReference type="ChEBI" id="CHEBI:58525"/>
        <dbReference type="EC" id="5.3.1.16"/>
    </reaction>
</comment>
<comment type="pathway">
    <text evidence="1">Amino-acid biosynthesis; L-histidine biosynthesis; L-histidine from 5-phospho-alpha-D-ribose 1-diphosphate: step 4/9.</text>
</comment>
<comment type="subcellular location">
    <subcellularLocation>
        <location evidence="1">Cytoplasm</location>
    </subcellularLocation>
</comment>
<comment type="similarity">
    <text evidence="1">Belongs to the HisA/HisF family.</text>
</comment>
<dbReference type="EC" id="5.3.1.16" evidence="1"/>
<dbReference type="EMBL" id="CP000753">
    <property type="protein sequence ID" value="ABS08560.1"/>
    <property type="molecule type" value="Genomic_DNA"/>
</dbReference>
<dbReference type="RefSeq" id="WP_012089367.1">
    <property type="nucleotide sequence ID" value="NC_009665.1"/>
</dbReference>
<dbReference type="SMR" id="A6WP21"/>
<dbReference type="KEGG" id="sbm:Shew185_2423"/>
<dbReference type="HOGENOM" id="CLU_048577_1_2_6"/>
<dbReference type="UniPathway" id="UPA00031">
    <property type="reaction ID" value="UER00009"/>
</dbReference>
<dbReference type="GO" id="GO:0005737">
    <property type="term" value="C:cytoplasm"/>
    <property type="evidence" value="ECO:0007669"/>
    <property type="project" value="UniProtKB-SubCell"/>
</dbReference>
<dbReference type="GO" id="GO:0003949">
    <property type="term" value="F:1-(5-phosphoribosyl)-5-[(5-phosphoribosylamino)methylideneamino]imidazole-4-carboxamide isomerase activity"/>
    <property type="evidence" value="ECO:0007669"/>
    <property type="project" value="UniProtKB-UniRule"/>
</dbReference>
<dbReference type="GO" id="GO:0000105">
    <property type="term" value="P:L-histidine biosynthetic process"/>
    <property type="evidence" value="ECO:0007669"/>
    <property type="project" value="UniProtKB-UniRule"/>
</dbReference>
<dbReference type="GO" id="GO:0000162">
    <property type="term" value="P:L-tryptophan biosynthetic process"/>
    <property type="evidence" value="ECO:0007669"/>
    <property type="project" value="TreeGrafter"/>
</dbReference>
<dbReference type="CDD" id="cd04732">
    <property type="entry name" value="HisA"/>
    <property type="match status" value="1"/>
</dbReference>
<dbReference type="FunFam" id="3.20.20.70:FF:000009">
    <property type="entry name" value="1-(5-phosphoribosyl)-5-[(5-phosphoribosylamino)methylideneamino] imidazole-4-carboxamide isomerase"/>
    <property type="match status" value="1"/>
</dbReference>
<dbReference type="Gene3D" id="3.20.20.70">
    <property type="entry name" value="Aldolase class I"/>
    <property type="match status" value="1"/>
</dbReference>
<dbReference type="HAMAP" id="MF_01014">
    <property type="entry name" value="HisA"/>
    <property type="match status" value="1"/>
</dbReference>
<dbReference type="InterPro" id="IPR013785">
    <property type="entry name" value="Aldolase_TIM"/>
</dbReference>
<dbReference type="InterPro" id="IPR006062">
    <property type="entry name" value="His_biosynth"/>
</dbReference>
<dbReference type="InterPro" id="IPR006063">
    <property type="entry name" value="HisA_bact_arch"/>
</dbReference>
<dbReference type="InterPro" id="IPR044524">
    <property type="entry name" value="Isoase_HisA-like"/>
</dbReference>
<dbReference type="InterPro" id="IPR023016">
    <property type="entry name" value="Isoase_HisA-like_bact"/>
</dbReference>
<dbReference type="InterPro" id="IPR011060">
    <property type="entry name" value="RibuloseP-bd_barrel"/>
</dbReference>
<dbReference type="NCBIfam" id="TIGR00007">
    <property type="entry name" value="1-(5-phosphoribosyl)-5-[(5-phosphoribosylamino)methylideneamino]imidazole-4-carboxamide isomerase"/>
    <property type="match status" value="1"/>
</dbReference>
<dbReference type="PANTHER" id="PTHR43090">
    <property type="entry name" value="1-(5-PHOSPHORIBOSYL)-5-[(5-PHOSPHORIBOSYLAMINO)METHYLIDENEAMINO] IMIDAZOLE-4-CARBOXAMIDE ISOMERASE"/>
    <property type="match status" value="1"/>
</dbReference>
<dbReference type="PANTHER" id="PTHR43090:SF2">
    <property type="entry name" value="1-(5-PHOSPHORIBOSYL)-5-[(5-PHOSPHORIBOSYLAMINO)METHYLIDENEAMINO] IMIDAZOLE-4-CARBOXAMIDE ISOMERASE"/>
    <property type="match status" value="1"/>
</dbReference>
<dbReference type="Pfam" id="PF00977">
    <property type="entry name" value="His_biosynth"/>
    <property type="match status" value="1"/>
</dbReference>
<dbReference type="SUPFAM" id="SSF51366">
    <property type="entry name" value="Ribulose-phoshate binding barrel"/>
    <property type="match status" value="1"/>
</dbReference>
<accession>A6WP21</accession>
<proteinExistence type="inferred from homology"/>
<keyword id="KW-0028">Amino-acid biosynthesis</keyword>
<keyword id="KW-0963">Cytoplasm</keyword>
<keyword id="KW-0368">Histidine biosynthesis</keyword>
<keyword id="KW-0413">Isomerase</keyword>
<evidence type="ECO:0000255" key="1">
    <source>
        <dbReference type="HAMAP-Rule" id="MF_01014"/>
    </source>
</evidence>
<reference key="1">
    <citation type="submission" date="2007-07" db="EMBL/GenBank/DDBJ databases">
        <title>Complete sequence of chromosome of Shewanella baltica OS185.</title>
        <authorList>
            <consortium name="US DOE Joint Genome Institute"/>
            <person name="Copeland A."/>
            <person name="Lucas S."/>
            <person name="Lapidus A."/>
            <person name="Barry K."/>
            <person name="Glavina del Rio T."/>
            <person name="Dalin E."/>
            <person name="Tice H."/>
            <person name="Pitluck S."/>
            <person name="Sims D."/>
            <person name="Brettin T."/>
            <person name="Bruce D."/>
            <person name="Detter J.C."/>
            <person name="Han C."/>
            <person name="Schmutz J."/>
            <person name="Larimer F."/>
            <person name="Land M."/>
            <person name="Hauser L."/>
            <person name="Kyrpides N."/>
            <person name="Mikhailova N."/>
            <person name="Brettar I."/>
            <person name="Rodrigues J."/>
            <person name="Konstantinidis K."/>
            <person name="Tiedje J."/>
            <person name="Richardson P."/>
        </authorList>
    </citation>
    <scope>NUCLEOTIDE SEQUENCE [LARGE SCALE GENOMIC DNA]</scope>
    <source>
        <strain>OS185</strain>
    </source>
</reference>